<comment type="function">
    <text>Involved in O antigen modification. Catalyzes the transfer of the glucose residue from UDP-glucose to a lipid carrier.</text>
</comment>
<comment type="subcellular location">
    <subcellularLocation>
        <location evidence="2">Host membrane</location>
        <topology evidence="2">Multi-pass membrane protein</topology>
    </subcellularLocation>
</comment>
<comment type="similarity">
    <text evidence="2">Belongs to the glycosyltransferase 2 family. GtrB subfamily.</text>
</comment>
<feature type="chain" id="PRO_0000059193" description="Bactoprenol glucosyl transferase">
    <location>
        <begin position="1"/>
        <end position="305"/>
    </location>
</feature>
<feature type="transmembrane region" description="Helical" evidence="1">
    <location>
        <begin position="229"/>
        <end position="249"/>
    </location>
</feature>
<feature type="transmembrane region" description="Helical" evidence="1">
    <location>
        <begin position="263"/>
        <end position="283"/>
    </location>
</feature>
<keyword id="KW-0328">Glycosyltransferase</keyword>
<keyword id="KW-1043">Host membrane</keyword>
<keyword id="KW-0472">Membrane</keyword>
<keyword id="KW-0808">Transferase</keyword>
<keyword id="KW-0812">Transmembrane</keyword>
<keyword id="KW-1133">Transmembrane helix</keyword>
<organism>
    <name type="scientific">Shigella phage SfX</name>
    <name type="common">Shigella flexneri bacteriophage X</name>
    <name type="synonym">Bacteriophage SfX</name>
    <dbReference type="NCBI Taxonomy" id="10874"/>
    <lineage>
        <taxon>Viruses</taxon>
        <taxon>Duplodnaviria</taxon>
        <taxon>Heunggongvirae</taxon>
        <taxon>Uroviricota</taxon>
        <taxon>Caudoviricetes</taxon>
    </lineage>
</organism>
<accession>Q9T1D6</accession>
<name>GTRB_BPSFX</name>
<evidence type="ECO:0000255" key="1"/>
<evidence type="ECO:0000305" key="2"/>
<dbReference type="EC" id="2.4.1.-"/>
<dbReference type="EMBL" id="AF056939">
    <property type="protein sequence ID" value="AAF22454.1"/>
    <property type="molecule type" value="Genomic_DNA"/>
</dbReference>
<dbReference type="SMR" id="Q9T1D6"/>
<dbReference type="CAZy" id="GT2">
    <property type="family name" value="Glycosyltransferase Family 2"/>
</dbReference>
<dbReference type="GO" id="GO:0033644">
    <property type="term" value="C:host cell membrane"/>
    <property type="evidence" value="ECO:0007669"/>
    <property type="project" value="UniProtKB-SubCell"/>
</dbReference>
<dbReference type="GO" id="GO:0005886">
    <property type="term" value="C:plasma membrane"/>
    <property type="evidence" value="ECO:0007669"/>
    <property type="project" value="TreeGrafter"/>
</dbReference>
<dbReference type="GO" id="GO:0016757">
    <property type="term" value="F:glycosyltransferase activity"/>
    <property type="evidence" value="ECO:0007669"/>
    <property type="project" value="UniProtKB-KW"/>
</dbReference>
<dbReference type="CDD" id="cd04187">
    <property type="entry name" value="DPM1_like_bac"/>
    <property type="match status" value="1"/>
</dbReference>
<dbReference type="FunFam" id="3.90.550.10:FF:000099">
    <property type="entry name" value="Bactoprenol glucosyl transferase"/>
    <property type="match status" value="1"/>
</dbReference>
<dbReference type="Gene3D" id="3.90.550.10">
    <property type="entry name" value="Spore Coat Polysaccharide Biosynthesis Protein SpsA, Chain A"/>
    <property type="match status" value="1"/>
</dbReference>
<dbReference type="InterPro" id="IPR001173">
    <property type="entry name" value="Glyco_trans_2-like"/>
</dbReference>
<dbReference type="InterPro" id="IPR050256">
    <property type="entry name" value="Glycosyltransferase_2"/>
</dbReference>
<dbReference type="InterPro" id="IPR029044">
    <property type="entry name" value="Nucleotide-diphossugar_trans"/>
</dbReference>
<dbReference type="PANTHER" id="PTHR48090:SF1">
    <property type="entry name" value="PROPHAGE BACTOPRENOL GLUCOSYL TRANSFERASE HOMOLOG"/>
    <property type="match status" value="1"/>
</dbReference>
<dbReference type="PANTHER" id="PTHR48090">
    <property type="entry name" value="UNDECAPRENYL-PHOSPHATE 4-DEOXY-4-FORMAMIDO-L-ARABINOSE TRANSFERASE-RELATED"/>
    <property type="match status" value="1"/>
</dbReference>
<dbReference type="Pfam" id="PF00535">
    <property type="entry name" value="Glycos_transf_2"/>
    <property type="match status" value="1"/>
</dbReference>
<dbReference type="SUPFAM" id="SSF53448">
    <property type="entry name" value="Nucleotide-diphospho-sugar transferases"/>
    <property type="match status" value="1"/>
</dbReference>
<proteinExistence type="inferred from homology"/>
<protein>
    <recommendedName>
        <fullName>Bactoprenol glucosyl transferase</fullName>
        <ecNumber>2.4.1.-</ecNumber>
    </recommendedName>
</protein>
<sequence length="305" mass="34570">MKISLVVPVFNEEEAIPIFYKTVREFEELKPYEVEIVFINDGSKDATESIINALAVSDPLVVPLSFTRNFGKEPALFAGLDHTTGDAVIPIDVDLQDPIEVIPRLIEKWQAGADMVLAKRSDRSTDGRLKRKTAEWFYKLHNKISTPKIEENVGDFRLMSREVVENIKLLPERNLFMKGILSWVGGQTDVVEYVRTERVAGISKFNGWKLWNLALEGITSFSTFPLRVWTYIGLFVASISFLYGAWMIIDTIVFGNPVRGYPSMLVSILFLGGVQLIGIGVLGEYIGRIYLETKSRPRYLIKSRK</sequence>
<gene>
    <name type="primary">gtrB</name>
</gene>
<organismHost>
    <name type="scientific">Shigella flexneri</name>
    <dbReference type="NCBI Taxonomy" id="623"/>
</organismHost>
<reference key="1">
    <citation type="journal article" date="1999" name="Microbiology">
        <title>Functional analysis of the O antigen glucosylation gene cluster of Shigella flexneri bacteriophage SfX.</title>
        <authorList>
            <person name="Guan S."/>
            <person name="Bastin D.A."/>
            <person name="Verma N.K."/>
        </authorList>
    </citation>
    <scope>NUCLEOTIDE SEQUENCE [GENOMIC DNA]</scope>
</reference>